<protein>
    <recommendedName>
        <fullName>DDB1- and CUL4-associated factor 10</fullName>
    </recommendedName>
    <alternativeName>
        <fullName>WD repeat-containing protein 32</fullName>
    </alternativeName>
</protein>
<organism>
    <name type="scientific">Homo sapiens</name>
    <name type="common">Human</name>
    <dbReference type="NCBI Taxonomy" id="9606"/>
    <lineage>
        <taxon>Eukaryota</taxon>
        <taxon>Metazoa</taxon>
        <taxon>Chordata</taxon>
        <taxon>Craniata</taxon>
        <taxon>Vertebrata</taxon>
        <taxon>Euteleostomi</taxon>
        <taxon>Mammalia</taxon>
        <taxon>Eutheria</taxon>
        <taxon>Euarchontoglires</taxon>
        <taxon>Primates</taxon>
        <taxon>Haplorrhini</taxon>
        <taxon>Catarrhini</taxon>
        <taxon>Hominidae</taxon>
        <taxon>Homo</taxon>
    </lineage>
</organism>
<evidence type="ECO:0000250" key="1">
    <source>
        <dbReference type="UniProtKB" id="A2AKB9"/>
    </source>
</evidence>
<evidence type="ECO:0000256" key="2">
    <source>
        <dbReference type="SAM" id="MobiDB-lite"/>
    </source>
</evidence>
<evidence type="ECO:0000269" key="3">
    <source>
    </source>
</evidence>
<evidence type="ECO:0000303" key="4">
    <source>
    </source>
</evidence>
<evidence type="ECO:0000305" key="5"/>
<evidence type="ECO:0007744" key="6">
    <source>
    </source>
</evidence>
<evidence type="ECO:0007744" key="7">
    <source>
    </source>
</evidence>
<evidence type="ECO:0007744" key="8">
    <source>
    </source>
</evidence>
<keyword id="KW-0025">Alternative splicing</keyword>
<keyword id="KW-0488">Methylation</keyword>
<keyword id="KW-0597">Phosphoprotein</keyword>
<keyword id="KW-1267">Proteomics identification</keyword>
<keyword id="KW-1185">Reference proteome</keyword>
<keyword id="KW-0677">Repeat</keyword>
<keyword id="KW-0833">Ubl conjugation pathway</keyword>
<keyword id="KW-0853">WD repeat</keyword>
<sequence length="559" mass="60582">MFPFGPHSPGGDGSAGAGAEEPTPHEGQAAATGPPSPLHPGADATHPPPPARSPRRPGAPSLSPAPRSGELGLPGAPESSTASAPGEPSPPSPPCRRPGPDCRAKSRGRHGLGAGLGGPGARLFGWLKERSLGRGLFVDPARDNFRTMTSLYGSIHPADSVYLSTRTHGAVFNLEYSPDGSVLTVACEQTEVLLFDPISSKHIKTLSEAHEDCVNNIRFLDNRLFATCSDDTTIALWDLRKLNTKVCTLHGHTSWVKNIEYDTNTRLLVTSGFDGNVIIWDTNRYTEDGCPHKKFFHTRFLMRMRLTPDCSKMLISTSSGYLLILHDLDLTKSLEVGSYPILRARRTTSSSDLTTSSSSSGPRVSGSPCHHSDSNSSEKHMSRASQREGVSPRNSLEVVTPEVLGESDHGNCITSLQLHPKGWATLLRCSSNSDDEECTCVYEFQEGAPVRPVSPRCSLRLTHYIEEANVGRGYIKELCFSPDGRMISSPHGYGIRLLGFDKQCSELVDCLPKEASPLRVIRSLYSHNDVVLTTKFSPTHCQIASGCLSGRVSLYQPKF</sequence>
<reference key="1">
    <citation type="journal article" date="2004" name="Nature">
        <title>DNA sequence and analysis of human chromosome 9.</title>
        <authorList>
            <person name="Humphray S.J."/>
            <person name="Oliver K."/>
            <person name="Hunt A.R."/>
            <person name="Plumb R.W."/>
            <person name="Loveland J.E."/>
            <person name="Howe K.L."/>
            <person name="Andrews T.D."/>
            <person name="Searle S."/>
            <person name="Hunt S.E."/>
            <person name="Scott C.E."/>
            <person name="Jones M.C."/>
            <person name="Ainscough R."/>
            <person name="Almeida J.P."/>
            <person name="Ambrose K.D."/>
            <person name="Ashwell R.I.S."/>
            <person name="Babbage A.K."/>
            <person name="Babbage S."/>
            <person name="Bagguley C.L."/>
            <person name="Bailey J."/>
            <person name="Banerjee R."/>
            <person name="Barker D.J."/>
            <person name="Barlow K.F."/>
            <person name="Bates K."/>
            <person name="Beasley H."/>
            <person name="Beasley O."/>
            <person name="Bird C.P."/>
            <person name="Bray-Allen S."/>
            <person name="Brown A.J."/>
            <person name="Brown J.Y."/>
            <person name="Burford D."/>
            <person name="Burrill W."/>
            <person name="Burton J."/>
            <person name="Carder C."/>
            <person name="Carter N.P."/>
            <person name="Chapman J.C."/>
            <person name="Chen Y."/>
            <person name="Clarke G."/>
            <person name="Clark S.Y."/>
            <person name="Clee C.M."/>
            <person name="Clegg S."/>
            <person name="Collier R.E."/>
            <person name="Corby N."/>
            <person name="Crosier M."/>
            <person name="Cummings A.T."/>
            <person name="Davies J."/>
            <person name="Dhami P."/>
            <person name="Dunn M."/>
            <person name="Dutta I."/>
            <person name="Dyer L.W."/>
            <person name="Earthrowl M.E."/>
            <person name="Faulkner L."/>
            <person name="Fleming C.J."/>
            <person name="Frankish A."/>
            <person name="Frankland J.A."/>
            <person name="French L."/>
            <person name="Fricker D.G."/>
            <person name="Garner P."/>
            <person name="Garnett J."/>
            <person name="Ghori J."/>
            <person name="Gilbert J.G.R."/>
            <person name="Glison C."/>
            <person name="Grafham D.V."/>
            <person name="Gribble S."/>
            <person name="Griffiths C."/>
            <person name="Griffiths-Jones S."/>
            <person name="Grocock R."/>
            <person name="Guy J."/>
            <person name="Hall R.E."/>
            <person name="Hammond S."/>
            <person name="Harley J.L."/>
            <person name="Harrison E.S.I."/>
            <person name="Hart E.A."/>
            <person name="Heath P.D."/>
            <person name="Henderson C.D."/>
            <person name="Hopkins B.L."/>
            <person name="Howard P.J."/>
            <person name="Howden P.J."/>
            <person name="Huckle E."/>
            <person name="Johnson C."/>
            <person name="Johnson D."/>
            <person name="Joy A.A."/>
            <person name="Kay M."/>
            <person name="Keenan S."/>
            <person name="Kershaw J.K."/>
            <person name="Kimberley A.M."/>
            <person name="King A."/>
            <person name="Knights A."/>
            <person name="Laird G.K."/>
            <person name="Langford C."/>
            <person name="Lawlor S."/>
            <person name="Leongamornlert D.A."/>
            <person name="Leversha M."/>
            <person name="Lloyd C."/>
            <person name="Lloyd D.M."/>
            <person name="Lovell J."/>
            <person name="Martin S."/>
            <person name="Mashreghi-Mohammadi M."/>
            <person name="Matthews L."/>
            <person name="McLaren S."/>
            <person name="McLay K.E."/>
            <person name="McMurray A."/>
            <person name="Milne S."/>
            <person name="Nickerson T."/>
            <person name="Nisbett J."/>
            <person name="Nordsiek G."/>
            <person name="Pearce A.V."/>
            <person name="Peck A.I."/>
            <person name="Porter K.M."/>
            <person name="Pandian R."/>
            <person name="Pelan S."/>
            <person name="Phillimore B."/>
            <person name="Povey S."/>
            <person name="Ramsey Y."/>
            <person name="Rand V."/>
            <person name="Scharfe M."/>
            <person name="Sehra H.K."/>
            <person name="Shownkeen R."/>
            <person name="Sims S.K."/>
            <person name="Skuce C.D."/>
            <person name="Smith M."/>
            <person name="Steward C.A."/>
            <person name="Swarbreck D."/>
            <person name="Sycamore N."/>
            <person name="Tester J."/>
            <person name="Thorpe A."/>
            <person name="Tracey A."/>
            <person name="Tromans A."/>
            <person name="Thomas D.W."/>
            <person name="Wall M."/>
            <person name="Wallis J.M."/>
            <person name="West A.P."/>
            <person name="Whitehead S.L."/>
            <person name="Willey D.L."/>
            <person name="Williams S.A."/>
            <person name="Wilming L."/>
            <person name="Wray P.W."/>
            <person name="Young L."/>
            <person name="Ashurst J.L."/>
            <person name="Coulson A."/>
            <person name="Blocker H."/>
            <person name="Durbin R.M."/>
            <person name="Sulston J.E."/>
            <person name="Hubbard T."/>
            <person name="Jackson M.J."/>
            <person name="Bentley D.R."/>
            <person name="Beck S."/>
            <person name="Rogers J."/>
            <person name="Dunham I."/>
        </authorList>
    </citation>
    <scope>NUCLEOTIDE SEQUENCE [LARGE SCALE GENOMIC DNA]</scope>
</reference>
<reference key="2">
    <citation type="submission" date="2005-09" db="EMBL/GenBank/DDBJ databases">
        <authorList>
            <person name="Mural R.J."/>
            <person name="Istrail S."/>
            <person name="Sutton G.G."/>
            <person name="Florea L."/>
            <person name="Halpern A.L."/>
            <person name="Mobarry C.M."/>
            <person name="Lippert R."/>
            <person name="Walenz B."/>
            <person name="Shatkay H."/>
            <person name="Dew I."/>
            <person name="Miller J.R."/>
            <person name="Flanigan M.J."/>
            <person name="Edwards N.J."/>
            <person name="Bolanos R."/>
            <person name="Fasulo D."/>
            <person name="Halldorsson B.V."/>
            <person name="Hannenhalli S."/>
            <person name="Turner R."/>
            <person name="Yooseph S."/>
            <person name="Lu F."/>
            <person name="Nusskern D.R."/>
            <person name="Shue B.C."/>
            <person name="Zheng X.H."/>
            <person name="Zhong F."/>
            <person name="Delcher A.L."/>
            <person name="Huson D.H."/>
            <person name="Kravitz S.A."/>
            <person name="Mouchard L."/>
            <person name="Reinert K."/>
            <person name="Remington K.A."/>
            <person name="Clark A.G."/>
            <person name="Waterman M.S."/>
            <person name="Eichler E.E."/>
            <person name="Adams M.D."/>
            <person name="Hunkapiller M.W."/>
            <person name="Myers E.W."/>
            <person name="Venter J.C."/>
        </authorList>
    </citation>
    <scope>NUCLEOTIDE SEQUENCE [LARGE SCALE GENOMIC DNA]</scope>
</reference>
<reference key="3">
    <citation type="journal article" date="2004" name="Genome Res.">
        <title>The status, quality, and expansion of the NIH full-length cDNA project: the Mammalian Gene Collection (MGC).</title>
        <authorList>
            <consortium name="The MGC Project Team"/>
        </authorList>
    </citation>
    <scope>NUCLEOTIDE SEQUENCE [LARGE SCALE MRNA] (ISOFORM 1)</scope>
    <scope>NUCLEOTIDE SEQUENCE [LARGE SCALE MRNA] OF 298-559 (ISOFORM 2)</scope>
    <source>
        <tissue>Ovary</tissue>
        <tissue>Skin</tissue>
        <tissue>Uterus</tissue>
    </source>
</reference>
<reference key="4">
    <citation type="journal article" date="2004" name="Nat. Genet.">
        <title>Complete sequencing and characterization of 21,243 full-length human cDNAs.</title>
        <authorList>
            <person name="Ota T."/>
            <person name="Suzuki Y."/>
            <person name="Nishikawa T."/>
            <person name="Otsuki T."/>
            <person name="Sugiyama T."/>
            <person name="Irie R."/>
            <person name="Wakamatsu A."/>
            <person name="Hayashi K."/>
            <person name="Sato H."/>
            <person name="Nagai K."/>
            <person name="Kimura K."/>
            <person name="Makita H."/>
            <person name="Sekine M."/>
            <person name="Obayashi M."/>
            <person name="Nishi T."/>
            <person name="Shibahara T."/>
            <person name="Tanaka T."/>
            <person name="Ishii S."/>
            <person name="Yamamoto J."/>
            <person name="Saito K."/>
            <person name="Kawai Y."/>
            <person name="Isono Y."/>
            <person name="Nakamura Y."/>
            <person name="Nagahari K."/>
            <person name="Murakami K."/>
            <person name="Yasuda T."/>
            <person name="Iwayanagi T."/>
            <person name="Wagatsuma M."/>
            <person name="Shiratori A."/>
            <person name="Sudo H."/>
            <person name="Hosoiri T."/>
            <person name="Kaku Y."/>
            <person name="Kodaira H."/>
            <person name="Kondo H."/>
            <person name="Sugawara M."/>
            <person name="Takahashi M."/>
            <person name="Kanda K."/>
            <person name="Yokoi T."/>
            <person name="Furuya T."/>
            <person name="Kikkawa E."/>
            <person name="Omura Y."/>
            <person name="Abe K."/>
            <person name="Kamihara K."/>
            <person name="Katsuta N."/>
            <person name="Sato K."/>
            <person name="Tanikawa M."/>
            <person name="Yamazaki M."/>
            <person name="Ninomiya K."/>
            <person name="Ishibashi T."/>
            <person name="Yamashita H."/>
            <person name="Murakawa K."/>
            <person name="Fujimori K."/>
            <person name="Tanai H."/>
            <person name="Kimata M."/>
            <person name="Watanabe M."/>
            <person name="Hiraoka S."/>
            <person name="Chiba Y."/>
            <person name="Ishida S."/>
            <person name="Ono Y."/>
            <person name="Takiguchi S."/>
            <person name="Watanabe S."/>
            <person name="Yosida M."/>
            <person name="Hotuta T."/>
            <person name="Kusano J."/>
            <person name="Kanehori K."/>
            <person name="Takahashi-Fujii A."/>
            <person name="Hara H."/>
            <person name="Tanase T.-O."/>
            <person name="Nomura Y."/>
            <person name="Togiya S."/>
            <person name="Komai F."/>
            <person name="Hara R."/>
            <person name="Takeuchi K."/>
            <person name="Arita M."/>
            <person name="Imose N."/>
            <person name="Musashino K."/>
            <person name="Yuuki H."/>
            <person name="Oshima A."/>
            <person name="Sasaki N."/>
            <person name="Aotsuka S."/>
            <person name="Yoshikawa Y."/>
            <person name="Matsunawa H."/>
            <person name="Ichihara T."/>
            <person name="Shiohata N."/>
            <person name="Sano S."/>
            <person name="Moriya S."/>
            <person name="Momiyama H."/>
            <person name="Satoh N."/>
            <person name="Takami S."/>
            <person name="Terashima Y."/>
            <person name="Suzuki O."/>
            <person name="Nakagawa S."/>
            <person name="Senoh A."/>
            <person name="Mizoguchi H."/>
            <person name="Goto Y."/>
            <person name="Shimizu F."/>
            <person name="Wakebe H."/>
            <person name="Hishigaki H."/>
            <person name="Watanabe T."/>
            <person name="Sugiyama A."/>
            <person name="Takemoto M."/>
            <person name="Kawakami B."/>
            <person name="Yamazaki M."/>
            <person name="Watanabe K."/>
            <person name="Kumagai A."/>
            <person name="Itakura S."/>
            <person name="Fukuzumi Y."/>
            <person name="Fujimori Y."/>
            <person name="Komiyama M."/>
            <person name="Tashiro H."/>
            <person name="Tanigami A."/>
            <person name="Fujiwara T."/>
            <person name="Ono T."/>
            <person name="Yamada K."/>
            <person name="Fujii Y."/>
            <person name="Ozaki K."/>
            <person name="Hirao M."/>
            <person name="Ohmori Y."/>
            <person name="Kawabata A."/>
            <person name="Hikiji T."/>
            <person name="Kobatake N."/>
            <person name="Inagaki H."/>
            <person name="Ikema Y."/>
            <person name="Okamoto S."/>
            <person name="Okitani R."/>
            <person name="Kawakami T."/>
            <person name="Noguchi S."/>
            <person name="Itoh T."/>
            <person name="Shigeta K."/>
            <person name="Senba T."/>
            <person name="Matsumura K."/>
            <person name="Nakajima Y."/>
            <person name="Mizuno T."/>
            <person name="Morinaga M."/>
            <person name="Sasaki M."/>
            <person name="Togashi T."/>
            <person name="Oyama M."/>
            <person name="Hata H."/>
            <person name="Watanabe M."/>
            <person name="Komatsu T."/>
            <person name="Mizushima-Sugano J."/>
            <person name="Satoh T."/>
            <person name="Shirai Y."/>
            <person name="Takahashi Y."/>
            <person name="Nakagawa K."/>
            <person name="Okumura K."/>
            <person name="Nagase T."/>
            <person name="Nomura N."/>
            <person name="Kikuchi H."/>
            <person name="Masuho Y."/>
            <person name="Yamashita R."/>
            <person name="Nakai K."/>
            <person name="Yada T."/>
            <person name="Nakamura Y."/>
            <person name="Ohara O."/>
            <person name="Isogai T."/>
            <person name="Sugano S."/>
        </authorList>
    </citation>
    <scope>NUCLEOTIDE SEQUENCE [LARGE SCALE MRNA] OF 145-559</scope>
    <source>
        <tissue>Embryo</tissue>
        <tissue>Ileal mucosa</tissue>
    </source>
</reference>
<reference key="5">
    <citation type="journal article" date="2006" name="Mol. Cell">
        <title>A family of diverse Cul4-Ddb1-interacting proteins includes Cdt2, which is required for S phase destruction of the replication factor Cdt1.</title>
        <authorList>
            <person name="Jin J."/>
            <person name="Arias E.E."/>
            <person name="Chen J."/>
            <person name="Harper J.W."/>
            <person name="Walter J.C."/>
        </authorList>
    </citation>
    <scope>FUNCTION</scope>
    <scope>INTERACTION WITH DDB1</scope>
    <scope>IDENTIFICATION BY MASS SPECTROMETRY</scope>
</reference>
<reference key="6">
    <citation type="journal article" date="2009" name="Anal. Chem.">
        <title>Lys-N and trypsin cover complementary parts of the phosphoproteome in a refined SCX-based approach.</title>
        <authorList>
            <person name="Gauci S."/>
            <person name="Helbig A.O."/>
            <person name="Slijper M."/>
            <person name="Krijgsveld J."/>
            <person name="Heck A.J."/>
            <person name="Mohammed S."/>
        </authorList>
    </citation>
    <scope>IDENTIFICATION BY MASS SPECTROMETRY [LARGE SCALE ANALYSIS]</scope>
</reference>
<reference key="7">
    <citation type="journal article" date="2009" name="Mol. Cell. Proteomics">
        <title>Large-scale proteomics analysis of the human kinome.</title>
        <authorList>
            <person name="Oppermann F.S."/>
            <person name="Gnad F."/>
            <person name="Olsen J.V."/>
            <person name="Hornberger R."/>
            <person name="Greff Z."/>
            <person name="Keri G."/>
            <person name="Mann M."/>
            <person name="Daub H."/>
        </authorList>
    </citation>
    <scope>IDENTIFICATION BY MASS SPECTROMETRY [LARGE SCALE ANALYSIS]</scope>
</reference>
<reference key="8">
    <citation type="journal article" date="2009" name="Sci. Signal.">
        <title>Quantitative phosphoproteomic analysis of T cell receptor signaling reveals system-wide modulation of protein-protein interactions.</title>
        <authorList>
            <person name="Mayya V."/>
            <person name="Lundgren D.H."/>
            <person name="Hwang S.-I."/>
            <person name="Rezaul K."/>
            <person name="Wu L."/>
            <person name="Eng J.K."/>
            <person name="Rodionov V."/>
            <person name="Han D.K."/>
        </authorList>
    </citation>
    <scope>IDENTIFICATION BY MASS SPECTROMETRY [LARGE SCALE ANALYSIS]</scope>
    <source>
        <tissue>Leukemic T-cell</tissue>
    </source>
</reference>
<reference key="9">
    <citation type="journal article" date="2013" name="J. Proteome Res.">
        <title>Toward a comprehensive characterization of a human cancer cell phosphoproteome.</title>
        <authorList>
            <person name="Zhou H."/>
            <person name="Di Palma S."/>
            <person name="Preisinger C."/>
            <person name="Peng M."/>
            <person name="Polat A.N."/>
            <person name="Heck A.J."/>
            <person name="Mohammed S."/>
        </authorList>
    </citation>
    <scope>PHOSPHORYLATION [LARGE SCALE ANALYSIS] AT SER-63; SER-92 AND SER-349</scope>
    <scope>IDENTIFICATION BY MASS SPECTROMETRY [LARGE SCALE ANALYSIS]</scope>
    <source>
        <tissue>Erythroleukemia</tissue>
    </source>
</reference>
<reference key="10">
    <citation type="journal article" date="2014" name="J. Proteomics">
        <title>An enzyme assisted RP-RPLC approach for in-depth analysis of human liver phosphoproteome.</title>
        <authorList>
            <person name="Bian Y."/>
            <person name="Song C."/>
            <person name="Cheng K."/>
            <person name="Dong M."/>
            <person name="Wang F."/>
            <person name="Huang J."/>
            <person name="Sun D."/>
            <person name="Wang L."/>
            <person name="Ye M."/>
            <person name="Zou H."/>
        </authorList>
    </citation>
    <scope>PHOSPHORYLATION [LARGE SCALE ANALYSIS] AT SER-63 AND SER-92</scope>
    <scope>IDENTIFICATION BY MASS SPECTROMETRY [LARGE SCALE ANALYSIS]</scope>
    <source>
        <tissue>Liver</tissue>
    </source>
</reference>
<reference key="11">
    <citation type="journal article" date="2014" name="Mol. Cell. Proteomics">
        <title>Immunoaffinity enrichment and mass spectrometry analysis of protein methylation.</title>
        <authorList>
            <person name="Guo A."/>
            <person name="Gu H."/>
            <person name="Zhou J."/>
            <person name="Mulhern D."/>
            <person name="Wang Y."/>
            <person name="Lee K.A."/>
            <person name="Yang V."/>
            <person name="Aguiar M."/>
            <person name="Kornhauser J."/>
            <person name="Jia X."/>
            <person name="Ren J."/>
            <person name="Beausoleil S.A."/>
            <person name="Silva J.C."/>
            <person name="Vemulapalli V."/>
            <person name="Bedford M.T."/>
            <person name="Comb M.J."/>
        </authorList>
    </citation>
    <scope>METHYLATION [LARGE SCALE ANALYSIS] AT ARG-134</scope>
    <scope>IDENTIFICATION BY MASS SPECTROMETRY [LARGE SCALE ANALYSIS]</scope>
    <source>
        <tissue>Colon carcinoma</tissue>
    </source>
</reference>
<accession>Q5QP82</accession>
<accession>A4VCJ5</accession>
<accession>Q32NE2</accession>
<accession>Q8N2Q5</accession>
<accession>Q96ET5</accession>
<accession>Q9BTQ5</accession>
<accession>Q9H5P6</accession>
<dbReference type="EMBL" id="AL138752">
    <property type="status" value="NOT_ANNOTATED_CDS"/>
    <property type="molecule type" value="Genomic_DNA"/>
</dbReference>
<dbReference type="EMBL" id="CH471071">
    <property type="protein sequence ID" value="EAW58263.1"/>
    <property type="molecule type" value="Genomic_DNA"/>
</dbReference>
<dbReference type="EMBL" id="BC003520">
    <property type="protein sequence ID" value="AAH03520.2"/>
    <property type="molecule type" value="mRNA"/>
</dbReference>
<dbReference type="EMBL" id="BC011959">
    <property type="protein sequence ID" value="AAH11959.2"/>
    <property type="molecule type" value="mRNA"/>
</dbReference>
<dbReference type="EMBL" id="BC108686">
    <property type="protein sequence ID" value="AAI08687.1"/>
    <property type="status" value="ALT_INIT"/>
    <property type="molecule type" value="mRNA"/>
</dbReference>
<dbReference type="EMBL" id="BC139834">
    <property type="protein sequence ID" value="AAI39835.1"/>
    <property type="molecule type" value="mRNA"/>
</dbReference>
<dbReference type="EMBL" id="AK026854">
    <property type="protein sequence ID" value="BAB15574.1"/>
    <property type="status" value="ALT_INIT"/>
    <property type="molecule type" value="mRNA"/>
</dbReference>
<dbReference type="EMBL" id="AK074532">
    <property type="protein sequence ID" value="BAC11043.1"/>
    <property type="status" value="ALT_INIT"/>
    <property type="molecule type" value="mRNA"/>
</dbReference>
<dbReference type="CCDS" id="CCDS6613.2">
    <molecule id="Q5QP82-1"/>
</dbReference>
<dbReference type="RefSeq" id="NP_001273739.1">
    <property type="nucleotide sequence ID" value="NM_001286810.1"/>
</dbReference>
<dbReference type="RefSeq" id="NP_077321.3">
    <molecule id="Q5QP82-1"/>
    <property type="nucleotide sequence ID" value="NM_024345.4"/>
</dbReference>
<dbReference type="RefSeq" id="XP_005251634.1">
    <molecule id="Q5QP82-2"/>
    <property type="nucleotide sequence ID" value="XM_005251577.5"/>
</dbReference>
<dbReference type="RefSeq" id="XP_054219761.1">
    <molecule id="Q5QP82-2"/>
    <property type="nucleotide sequence ID" value="XM_054363786.1"/>
</dbReference>
<dbReference type="SMR" id="Q5QP82"/>
<dbReference type="BioGRID" id="122612">
    <property type="interactions" value="154"/>
</dbReference>
<dbReference type="ComplexPortal" id="CPX-2817">
    <property type="entry name" value="CRL4-DCAF10 E3 ubiquitin ligase complex, CUL4A variant"/>
</dbReference>
<dbReference type="ComplexPortal" id="CPX-2819">
    <property type="entry name" value="CRL4-DCAF10 E3 ubiquitin ligase complex, CUL4B variant"/>
</dbReference>
<dbReference type="FunCoup" id="Q5QP82">
    <property type="interactions" value="1237"/>
</dbReference>
<dbReference type="IntAct" id="Q5QP82">
    <property type="interactions" value="89"/>
</dbReference>
<dbReference type="MINT" id="Q5QP82"/>
<dbReference type="STRING" id="9606.ENSP00000366953"/>
<dbReference type="GlyGen" id="Q5QP82">
    <property type="glycosylation" value="10 sites, 1 O-linked glycan (9 sites)"/>
</dbReference>
<dbReference type="iPTMnet" id="Q5QP82"/>
<dbReference type="PhosphoSitePlus" id="Q5QP82"/>
<dbReference type="BioMuta" id="DCAF10"/>
<dbReference type="DMDM" id="74762212"/>
<dbReference type="jPOST" id="Q5QP82"/>
<dbReference type="MassIVE" id="Q5QP82"/>
<dbReference type="PaxDb" id="9606-ENSP00000366953"/>
<dbReference type="PeptideAtlas" id="Q5QP82"/>
<dbReference type="ProteomicsDB" id="63640">
    <molecule id="Q5QP82-1"/>
</dbReference>
<dbReference type="ProteomicsDB" id="63641">
    <molecule id="Q5QP82-2"/>
</dbReference>
<dbReference type="Pumba" id="Q5QP82"/>
<dbReference type="Antibodypedia" id="12056">
    <property type="antibodies" value="96 antibodies from 19 providers"/>
</dbReference>
<dbReference type="DNASU" id="79269"/>
<dbReference type="Ensembl" id="ENST00000377724.8">
    <molecule id="Q5QP82-1"/>
    <property type="protein sequence ID" value="ENSP00000366953.3"/>
    <property type="gene ID" value="ENSG00000122741.16"/>
</dbReference>
<dbReference type="GeneID" id="79269"/>
<dbReference type="KEGG" id="hsa:79269"/>
<dbReference type="MANE-Select" id="ENST00000377724.8">
    <property type="protein sequence ID" value="ENSP00000366953.3"/>
    <property type="RefSeq nucleotide sequence ID" value="NM_024345.5"/>
    <property type="RefSeq protein sequence ID" value="NP_077321.3"/>
</dbReference>
<dbReference type="UCSC" id="uc004aao.5">
    <molecule id="Q5QP82-1"/>
    <property type="organism name" value="human"/>
</dbReference>
<dbReference type="AGR" id="HGNC:23686"/>
<dbReference type="CTD" id="79269"/>
<dbReference type="DisGeNET" id="79269"/>
<dbReference type="GeneCards" id="DCAF10"/>
<dbReference type="HGNC" id="HGNC:23686">
    <property type="gene designation" value="DCAF10"/>
</dbReference>
<dbReference type="HPA" id="ENSG00000122741">
    <property type="expression patterns" value="Low tissue specificity"/>
</dbReference>
<dbReference type="MalaCards" id="DCAF10"/>
<dbReference type="MIM" id="620295">
    <property type="type" value="gene"/>
</dbReference>
<dbReference type="neXtProt" id="NX_Q5QP82"/>
<dbReference type="OpenTargets" id="ENSG00000122741"/>
<dbReference type="PharmGKB" id="PA165585713"/>
<dbReference type="VEuPathDB" id="HostDB:ENSG00000122741"/>
<dbReference type="eggNOG" id="KOG0264">
    <property type="taxonomic scope" value="Eukaryota"/>
</dbReference>
<dbReference type="eggNOG" id="KOG4155">
    <property type="taxonomic scope" value="Eukaryota"/>
</dbReference>
<dbReference type="GeneTree" id="ENSGT00390000012666"/>
<dbReference type="InParanoid" id="Q5QP82"/>
<dbReference type="OMA" id="STAHEDC"/>
<dbReference type="OrthoDB" id="20669at2759"/>
<dbReference type="PAN-GO" id="Q5QP82">
    <property type="GO annotations" value="1 GO annotation based on evolutionary models"/>
</dbReference>
<dbReference type="PhylomeDB" id="Q5QP82"/>
<dbReference type="TreeFam" id="TF323434"/>
<dbReference type="PathwayCommons" id="Q5QP82"/>
<dbReference type="Reactome" id="R-HSA-8951664">
    <property type="pathway name" value="Neddylation"/>
</dbReference>
<dbReference type="SignaLink" id="Q5QP82"/>
<dbReference type="UniPathway" id="UPA00143"/>
<dbReference type="BioGRID-ORCS" id="79269">
    <property type="hits" value="14 hits in 1197 CRISPR screens"/>
</dbReference>
<dbReference type="ChiTaRS" id="DCAF10">
    <property type="organism name" value="human"/>
</dbReference>
<dbReference type="GenomeRNAi" id="79269"/>
<dbReference type="Pharos" id="Q5QP82">
    <property type="development level" value="Tdark"/>
</dbReference>
<dbReference type="PRO" id="PR:Q5QP82"/>
<dbReference type="Proteomes" id="UP000005640">
    <property type="component" value="Chromosome 9"/>
</dbReference>
<dbReference type="RNAct" id="Q5QP82">
    <property type="molecule type" value="protein"/>
</dbReference>
<dbReference type="Bgee" id="ENSG00000122741">
    <property type="expression patterns" value="Expressed in sperm and 189 other cell types or tissues"/>
</dbReference>
<dbReference type="ExpressionAtlas" id="Q5QP82">
    <property type="expression patterns" value="baseline and differential"/>
</dbReference>
<dbReference type="GO" id="GO:0080008">
    <property type="term" value="C:Cul4-RING E3 ubiquitin ligase complex"/>
    <property type="evidence" value="ECO:0000314"/>
    <property type="project" value="UniProtKB"/>
</dbReference>
<dbReference type="GO" id="GO:0005654">
    <property type="term" value="C:nucleoplasm"/>
    <property type="evidence" value="ECO:0000304"/>
    <property type="project" value="Reactome"/>
</dbReference>
<dbReference type="GO" id="GO:0016567">
    <property type="term" value="P:protein ubiquitination"/>
    <property type="evidence" value="ECO:0007669"/>
    <property type="project" value="UniProtKB-UniPathway"/>
</dbReference>
<dbReference type="FunFam" id="2.130.10.10:FF:000116">
    <property type="entry name" value="DDB1- and CUL4-associated factor 10"/>
    <property type="match status" value="1"/>
</dbReference>
<dbReference type="FunFam" id="2.130.10.10:FF:000321">
    <property type="entry name" value="DDB1- and CUL4-associated factor 10"/>
    <property type="match status" value="1"/>
</dbReference>
<dbReference type="Gene3D" id="2.130.10.10">
    <property type="entry name" value="YVTN repeat-like/Quinoprotein amine dehydrogenase"/>
    <property type="match status" value="2"/>
</dbReference>
<dbReference type="InterPro" id="IPR039085">
    <property type="entry name" value="DCA10"/>
</dbReference>
<dbReference type="InterPro" id="IPR015943">
    <property type="entry name" value="WD40/YVTN_repeat-like_dom_sf"/>
</dbReference>
<dbReference type="InterPro" id="IPR036322">
    <property type="entry name" value="WD40_repeat_dom_sf"/>
</dbReference>
<dbReference type="InterPro" id="IPR001680">
    <property type="entry name" value="WD40_rpt"/>
</dbReference>
<dbReference type="PANTHER" id="PTHR14588">
    <property type="entry name" value="DDB1- AND CUL4-ASSOCIATED FACTOR 10"/>
    <property type="match status" value="1"/>
</dbReference>
<dbReference type="PANTHER" id="PTHR14588:SF2">
    <property type="entry name" value="DDB1- AND CUL4-ASSOCIATED FACTOR 10"/>
    <property type="match status" value="1"/>
</dbReference>
<dbReference type="Pfam" id="PF00400">
    <property type="entry name" value="WD40"/>
    <property type="match status" value="3"/>
</dbReference>
<dbReference type="SMART" id="SM00320">
    <property type="entry name" value="WD40"/>
    <property type="match status" value="5"/>
</dbReference>
<dbReference type="SUPFAM" id="SSF50978">
    <property type="entry name" value="WD40 repeat-like"/>
    <property type="match status" value="1"/>
</dbReference>
<dbReference type="PROSITE" id="PS00678">
    <property type="entry name" value="WD_REPEATS_1"/>
    <property type="match status" value="1"/>
</dbReference>
<dbReference type="PROSITE" id="PS50082">
    <property type="entry name" value="WD_REPEATS_2"/>
    <property type="match status" value="2"/>
</dbReference>
<dbReference type="PROSITE" id="PS50294">
    <property type="entry name" value="WD_REPEATS_REGION"/>
    <property type="match status" value="1"/>
</dbReference>
<proteinExistence type="evidence at protein level"/>
<comment type="function">
    <text evidence="3">May function as a substrate receptor for CUL4-DDB1 E3 ubiquitin-protein ligase complex.</text>
</comment>
<comment type="pathway">
    <text>Protein modification; protein ubiquitination.</text>
</comment>
<comment type="subunit">
    <text evidence="3">Interacts with DDB1.</text>
</comment>
<comment type="interaction">
    <interactant intactId="EBI-723230">
        <id>Q5QP82</id>
    </interactant>
    <interactant intactId="EBI-2865388">
        <id>Q969G2</id>
        <label>LHX4</label>
    </interactant>
    <organismsDiffer>false</organismsDiffer>
    <experiments>3</experiments>
</comment>
<comment type="interaction">
    <interactant intactId="EBI-723230">
        <id>Q5QP82</id>
    </interactant>
    <interactant intactId="EBI-709754">
        <id>Q9HB07</id>
        <label>MYG1</label>
    </interactant>
    <organismsDiffer>false</organismsDiffer>
    <experiments>3</experiments>
</comment>
<comment type="interaction">
    <interactant intactId="EBI-723230">
        <id>Q5QP82</id>
    </interactant>
    <interactant intactId="EBI-7705988">
        <id>Q13356</id>
        <label>PPIL2</label>
    </interactant>
    <organismsDiffer>false</organismsDiffer>
    <experiments>3</experiments>
</comment>
<comment type="interaction">
    <interactant intactId="EBI-10983996">
        <id>Q5QP82-2</id>
    </interactant>
    <interactant intactId="EBI-21251460">
        <id>O60260-5</id>
        <label>PRKN</label>
    </interactant>
    <organismsDiffer>false</organismsDiffer>
    <experiments>3</experiments>
</comment>
<comment type="alternative products">
    <event type="alternative splicing"/>
    <isoform>
        <id>Q5QP82-1</id>
        <name>1</name>
        <sequence type="displayed"/>
    </isoform>
    <isoform>
        <id>Q5QP82-2</id>
        <name>2</name>
        <sequence type="described" ref="VSP_028513"/>
    </isoform>
</comment>
<comment type="similarity">
    <text evidence="5">Belongs to the WD repeat DCAF10 family.</text>
</comment>
<comment type="sequence caution" evidence="5">
    <conflict type="erroneous initiation">
        <sequence resource="EMBL-CDS" id="AAI08687"/>
    </conflict>
</comment>
<comment type="sequence caution" evidence="5">
    <conflict type="erroneous initiation">
        <sequence resource="EMBL-CDS" id="BAB15574"/>
    </conflict>
</comment>
<comment type="sequence caution" evidence="5">
    <conflict type="erroneous initiation">
        <sequence resource="EMBL-CDS" id="BAC11043"/>
    </conflict>
</comment>
<name>DCA10_HUMAN</name>
<gene>
    <name type="primary">DCAF10</name>
    <name type="synonym">WDR32</name>
</gene>
<feature type="chain" id="PRO_0000306833" description="DDB1- and CUL4-associated factor 10">
    <location>
        <begin position="1"/>
        <end position="559"/>
    </location>
</feature>
<feature type="repeat" description="WD 1">
    <location>
        <begin position="166"/>
        <end position="205"/>
    </location>
</feature>
<feature type="repeat" description="WD 2">
    <location>
        <begin position="209"/>
        <end position="247"/>
    </location>
</feature>
<feature type="repeat" description="WD 3">
    <location>
        <begin position="251"/>
        <end position="290"/>
    </location>
</feature>
<feature type="repeat" description="WD 4">
    <location>
        <begin position="296"/>
        <end position="335"/>
    </location>
</feature>
<feature type="repeat" description="WD 5">
    <location>
        <begin position="408"/>
        <end position="448"/>
    </location>
</feature>
<feature type="repeat" description="WD 6">
    <location>
        <begin position="470"/>
        <end position="508"/>
    </location>
</feature>
<feature type="repeat" description="WD 7">
    <location>
        <begin position="526"/>
        <end position="559"/>
    </location>
</feature>
<feature type="region of interest" description="Disordered" evidence="2">
    <location>
        <begin position="1"/>
        <end position="119"/>
    </location>
</feature>
<feature type="region of interest" description="Disordered" evidence="2">
    <location>
        <begin position="350"/>
        <end position="396"/>
    </location>
</feature>
<feature type="compositionally biased region" description="Low complexity" evidence="2">
    <location>
        <begin position="56"/>
        <end position="86"/>
    </location>
</feature>
<feature type="compositionally biased region" description="Pro residues" evidence="2">
    <location>
        <begin position="87"/>
        <end position="97"/>
    </location>
</feature>
<feature type="compositionally biased region" description="Low complexity" evidence="2">
    <location>
        <begin position="350"/>
        <end position="367"/>
    </location>
</feature>
<feature type="compositionally biased region" description="Basic and acidic residues" evidence="2">
    <location>
        <begin position="370"/>
        <end position="381"/>
    </location>
</feature>
<feature type="modified residue" description="Phosphoserine" evidence="1">
    <location>
        <position position="53"/>
    </location>
</feature>
<feature type="modified residue" description="Phosphoserine" evidence="6 8">
    <location>
        <position position="63"/>
    </location>
</feature>
<feature type="modified residue" description="Phosphoserine" evidence="1">
    <location>
        <position position="89"/>
    </location>
</feature>
<feature type="modified residue" description="Phosphoserine" evidence="6 8">
    <location>
        <position position="92"/>
    </location>
</feature>
<feature type="modified residue" description="Omega-N-methylarginine" evidence="7">
    <location>
        <position position="134"/>
    </location>
</feature>
<feature type="modified residue" description="Phosphoserine" evidence="6">
    <location>
        <position position="349"/>
    </location>
</feature>
<feature type="splice variant" id="VSP_028513" description="In isoform 2." evidence="4">
    <location>
        <begin position="352"/>
        <end position="388"/>
    </location>
</feature>
<feature type="sequence conflict" description="In Ref. 4; BAC11043." evidence="5" ref="4">
    <original>D</original>
    <variation>G</variation>
    <location>
        <position position="309"/>
    </location>
</feature>
<feature type="sequence conflict" description="In Ref. 3; AAH03520." evidence="5" ref="3">
    <original>K</original>
    <variation>N</variation>
    <location>
        <position position="332"/>
    </location>
</feature>
<feature type="sequence conflict" description="In Ref. 4; BAB15574." evidence="5" ref="4">
    <original>C</original>
    <variation>W</variation>
    <location>
        <position position="457"/>
    </location>
</feature>